<name>CCNH_BOVIN</name>
<evidence type="ECO:0000250" key="1"/>
<evidence type="ECO:0000250" key="2">
    <source>
        <dbReference type="UniProtKB" id="P51946"/>
    </source>
</evidence>
<evidence type="ECO:0000305" key="3"/>
<accession>Q3ZBL9</accession>
<dbReference type="EMBL" id="BC103224">
    <property type="protein sequence ID" value="AAI03225.1"/>
    <property type="molecule type" value="mRNA"/>
</dbReference>
<dbReference type="RefSeq" id="NP_001073256.1">
    <property type="nucleotide sequence ID" value="NM_001079788.2"/>
</dbReference>
<dbReference type="SMR" id="Q3ZBL9"/>
<dbReference type="FunCoup" id="Q3ZBL9">
    <property type="interactions" value="2295"/>
</dbReference>
<dbReference type="STRING" id="9913.ENSBTAP00000071635"/>
<dbReference type="PaxDb" id="9913-ENSBTAP00000034897"/>
<dbReference type="GeneID" id="615512"/>
<dbReference type="KEGG" id="bta:615512"/>
<dbReference type="CTD" id="902"/>
<dbReference type="eggNOG" id="KOG2496">
    <property type="taxonomic scope" value="Eukaryota"/>
</dbReference>
<dbReference type="InParanoid" id="Q3ZBL9"/>
<dbReference type="OrthoDB" id="340962at2759"/>
<dbReference type="Proteomes" id="UP000009136">
    <property type="component" value="Unplaced"/>
</dbReference>
<dbReference type="GO" id="GO:0005634">
    <property type="term" value="C:nucleus"/>
    <property type="evidence" value="ECO:0000318"/>
    <property type="project" value="GO_Central"/>
</dbReference>
<dbReference type="GO" id="GO:0005675">
    <property type="term" value="C:transcription factor TFIIH holo complex"/>
    <property type="evidence" value="ECO:0000250"/>
    <property type="project" value="UniProtKB"/>
</dbReference>
<dbReference type="GO" id="GO:0070985">
    <property type="term" value="C:transcription factor TFIIK complex"/>
    <property type="evidence" value="ECO:0000318"/>
    <property type="project" value="GO_Central"/>
</dbReference>
<dbReference type="GO" id="GO:0016538">
    <property type="term" value="F:cyclin-dependent protein serine/threonine kinase regulator activity"/>
    <property type="evidence" value="ECO:0000318"/>
    <property type="project" value="GO_Central"/>
</dbReference>
<dbReference type="GO" id="GO:0006357">
    <property type="term" value="P:regulation of transcription by RNA polymerase II"/>
    <property type="evidence" value="ECO:0000250"/>
    <property type="project" value="UniProtKB"/>
</dbReference>
<dbReference type="GO" id="GO:0006367">
    <property type="term" value="P:transcription initiation at RNA polymerase II promoter"/>
    <property type="evidence" value="ECO:0000318"/>
    <property type="project" value="GO_Central"/>
</dbReference>
<dbReference type="CDD" id="cd20524">
    <property type="entry name" value="CYCLIN_CCNH_rpt1"/>
    <property type="match status" value="1"/>
</dbReference>
<dbReference type="CDD" id="cd20525">
    <property type="entry name" value="CYCLIN_CCNH_rpt2"/>
    <property type="match status" value="1"/>
</dbReference>
<dbReference type="FunFam" id="1.10.472.10:FF:000029">
    <property type="entry name" value="Cyclin h"/>
    <property type="match status" value="1"/>
</dbReference>
<dbReference type="FunFam" id="1.10.472.10:FF:000044">
    <property type="entry name" value="cyclin-H isoform X1"/>
    <property type="match status" value="1"/>
</dbReference>
<dbReference type="Gene3D" id="1.10.472.10">
    <property type="entry name" value="Cyclin-like"/>
    <property type="match status" value="2"/>
</dbReference>
<dbReference type="InterPro" id="IPR013763">
    <property type="entry name" value="Cyclin-like_dom"/>
</dbReference>
<dbReference type="InterPro" id="IPR036915">
    <property type="entry name" value="Cyclin-like_sf"/>
</dbReference>
<dbReference type="InterPro" id="IPR043198">
    <property type="entry name" value="Cyclin/Ssn8"/>
</dbReference>
<dbReference type="InterPro" id="IPR031658">
    <property type="entry name" value="Cyclin_C_2"/>
</dbReference>
<dbReference type="InterPro" id="IPR006671">
    <property type="entry name" value="Cyclin_N"/>
</dbReference>
<dbReference type="InterPro" id="IPR027081">
    <property type="entry name" value="CyclinH/Ccl1"/>
</dbReference>
<dbReference type="NCBIfam" id="TIGR00569">
    <property type="entry name" value="ccl1"/>
    <property type="match status" value="1"/>
</dbReference>
<dbReference type="PANTHER" id="PTHR10026">
    <property type="entry name" value="CYCLIN"/>
    <property type="match status" value="1"/>
</dbReference>
<dbReference type="Pfam" id="PF16899">
    <property type="entry name" value="Cyclin_C_2"/>
    <property type="match status" value="1"/>
</dbReference>
<dbReference type="Pfam" id="PF00134">
    <property type="entry name" value="Cyclin_N"/>
    <property type="match status" value="1"/>
</dbReference>
<dbReference type="SMART" id="SM00385">
    <property type="entry name" value="CYCLIN"/>
    <property type="match status" value="1"/>
</dbReference>
<dbReference type="SUPFAM" id="SSF47954">
    <property type="entry name" value="Cyclin-like"/>
    <property type="match status" value="2"/>
</dbReference>
<comment type="function">
    <text evidence="1">Regulates CDK7, the catalytic subunit of the CDK-activating kinase (CAK) enzymatic complex. CAK activates the cyclin-associated kinases CDK1, CDK2, CDK4 and CDK6 by threonine phosphorylation. CAK complexed to the core-TFIIH basal transcription factor activates RNA polymerase II by serine phosphorylation of the repetitive C-terminal domain (CTD) of its large subunit (POLR2A), allowing its escape from the promoter and elongation of the transcripts. Involved in cell cycle control and in RNA transcription by RNA polymerase II. Its expression and activity are constant throughout the cell cycle (By similarity).</text>
</comment>
<comment type="subunit">
    <text evidence="1">Associates primarily with CDK7 and MAT1 to form the CAK complex. CAK can further associate with the core-TFIIH to form the TFIIH basal transcription factor (By similarity).</text>
</comment>
<comment type="subcellular location">
    <subcellularLocation>
        <location evidence="1">Nucleus</location>
    </subcellularLocation>
</comment>
<comment type="similarity">
    <text evidence="3">Belongs to the cyclin family. Cyclin C subfamily.</text>
</comment>
<gene>
    <name type="primary">CCNH</name>
</gene>
<organism>
    <name type="scientific">Bos taurus</name>
    <name type="common">Bovine</name>
    <dbReference type="NCBI Taxonomy" id="9913"/>
    <lineage>
        <taxon>Eukaryota</taxon>
        <taxon>Metazoa</taxon>
        <taxon>Chordata</taxon>
        <taxon>Craniata</taxon>
        <taxon>Vertebrata</taxon>
        <taxon>Euteleostomi</taxon>
        <taxon>Mammalia</taxon>
        <taxon>Eutheria</taxon>
        <taxon>Laurasiatheria</taxon>
        <taxon>Artiodactyla</taxon>
        <taxon>Ruminantia</taxon>
        <taxon>Pecora</taxon>
        <taxon>Bovidae</taxon>
        <taxon>Bovinae</taxon>
        <taxon>Bos</taxon>
    </lineage>
</organism>
<feature type="chain" id="PRO_0000282332" description="Cyclin-H">
    <location>
        <begin position="1"/>
        <end position="320"/>
    </location>
</feature>
<feature type="modified residue" description="Phosphoserine; by CDK8" evidence="2">
    <location>
        <position position="5"/>
    </location>
</feature>
<feature type="modified residue" description="Phosphoserine" evidence="2">
    <location>
        <position position="132"/>
    </location>
</feature>
<feature type="modified residue" description="Phosphoserine; by CDK8" evidence="2">
    <location>
        <position position="304"/>
    </location>
</feature>
<sequence length="320" mass="37028">MYHNSSQKRHWTFASEEQLARLRADANRKFKCKAVANGKVLPNDPVFLEPHEEITLCKYYEKRLLEFCSVFKPAMPRSVVGTACMYFKRFYLNNSVMEYHPRIIMLTCAFLACKVDEFNVSSPQFVGNLRESPLGQEKTLEQILEYELLLIQQLNFHLIVHNPYRPFEGFLIDLKTRYPLLENPEILRKTADDFLNRVALTDAHLLYTPSQIALTAILSSASRAGITMESYLSESLMLKENRTSLSQLLDIMKSMRNLVKKYEPPRPEEVAALKQKLERCHSAELALNVVTKKRKGYEDDDYVSKKSKHEEVCSPKGSFM</sequence>
<proteinExistence type="evidence at transcript level"/>
<reference key="1">
    <citation type="submission" date="2005-08" db="EMBL/GenBank/DDBJ databases">
        <authorList>
            <consortium name="NIH - Mammalian Gene Collection (MGC) project"/>
        </authorList>
    </citation>
    <scope>NUCLEOTIDE SEQUENCE [LARGE SCALE MRNA]</scope>
    <source>
        <strain>Hereford</strain>
        <tissue>Heart ventricle</tissue>
    </source>
</reference>
<keyword id="KW-0131">Cell cycle</keyword>
<keyword id="KW-0195">Cyclin</keyword>
<keyword id="KW-0539">Nucleus</keyword>
<keyword id="KW-0597">Phosphoprotein</keyword>
<keyword id="KW-1185">Reference proteome</keyword>
<keyword id="KW-0804">Transcription</keyword>
<keyword id="KW-0805">Transcription regulation</keyword>
<protein>
    <recommendedName>
        <fullName>Cyclin-H</fullName>
    </recommendedName>
</protein>